<protein>
    <recommendedName>
        <fullName evidence="13">Cytotoxin-L</fullName>
        <ecNumber evidence="4">3.4.22.-</ecNumber>
    </recommendedName>
    <alternativeName>
        <fullName evidence="12">Lethal toxin</fullName>
        <shortName evidence="12">LT</shortName>
    </alternativeName>
    <component>
        <recommendedName>
            <fullName evidence="14">Glucosyltransferase TcsL</fullName>
            <ecNumber evidence="4">2.4.1.-</ecNumber>
        </recommendedName>
    </component>
</protein>
<sequence length="2364" mass="270466">MNLVNKAQLQKMAYVKFRIQEDEYVAILNALEEYHNMSESSVVEKYLKLKDINNLTDNYLNTYKKSGRNKALKKFKEYLTMEVLELKNNSLTPVEKNLHFIWIGGQINDTAINYINQWKDVNSDYTVKVFYDSNAFLINTLKKTIVESATNNTLESFRENLNDPEFDYNKFYRKRMEIIYDKQKHFIDYYKSQIEENPEFIIDNIIKTYLSNEYSKDLEALNKYIEESLNKITANNGNDIRNLEKFADEDLVRLYNQELVERWNLAAASDILRISMLKEDGGVYLDVDMLPGIQPDLFKSINKPDSITNTSWEMIKLEAIMKYKEYIPGYTSKNFDMLDEEVQRSFESALSSKSDKSEIFLPLDDIKVSPLEVKIAFANNSVINQALISLKDSYCSDLVINQIKNRYKILNDNLNPSINEGTDFNTTMKIFSDKLASISNEDNMMFMIKITNYLKVGFAPDVRSTINLSGPGVYTGAYQDLLMFKDNSTNIHLLEPELRNFEFPKTKISQLTEQEITSLWSFNQARAKSQFEEYKKGYFEGALGEDDNLDFAQNTVLDKDYVSKKILSSMKTRNKEYIHYIVQLQGDKISYEASCNLFSKDPYSSILYQKNIEGSETAYYYSVADAEIKEIDKYRIPYQISNKRKIKLTFIGHGKSEFNTDTFANLDVDSLSSEIETILNLAKADISPKYIEINLLGCNMFSYSISAEETYPGKLLLKIKDRVSELMPSISQDSITVSANQYEVRINEEGKREILDHSGKWINKEESIIKDISSKEYISFNPKENKIIVKSKYLHELSTLLQEIRNNANSSDIDLEKKVMLTECEINVASNIDRQIVEGRIEEAKNLTSDSINYIKNEFKLIESISDSLYDLKHQNGLDDSHFISFEDISKTENGFRIRFINKETGNSIFIETEKEIFSEYATHISKEISNIKDTIFDNVNGKLVKKVNLDAAHEVNTLNSAFFIQSLIEYNTTKESLSNLSVAMKVQVYAQLFSTGLNTITDASKVVELVSTALDETIDLLPTLSEGLPIIATIIDGVSLGAAIKELSETNDPLLRQEIEAKIGIMAVNLTAASTAIVTSALGIASGFSILLVPLAGISAGIPSLVNNELILQDKATKVIDYFKHISLAETEGAFTLLDDKIIMPQDDLVLSEIDFNNNSITLGKCEIWRAEGGSGHTLTDDIDHFFSSPSITYRKPWLSIYDVLNIKKEKIDFSKDLMVLPNAPNRVFGYEMGWTPGFRSLDNDGTKLLDRIRDHYEGQFYWRYFAFIADALITKLKPRYEDTNVRINLDGNTRSFIVPVITTEQIRKNLSYSFYGSGGSYSLSLSPYNMNIDLNLVENDTWVIDVDNVVKNITIESDEIQKGELIENILSKLNIEDNKIILNNHTINFYGDINESNRFISLTFSILEDINIIIEIDLVSKSYKILLSGNCMKLIENSSDIQQKIDHIGFNGEHQKYIPYSYIDNETKYNGFIDYSKKEGLFTAEFSNESIIRNIYMPDSNNLFIYSSKDLKDIRIINKGDVKLLIGNYFKDDMKVSLSFTIEDTNTIKLNGVYLDENGVAQILKFMNNAKSALNTSNSLMNFLESINIKNIFYNNLDPNIEFILDTNFIISGSNSIGQFELICDKDKNIQPYFIKFKIKETSYTLYVGNRQNLIVEPSYHLDDSGNISSTVINFSQKYLYGIDRYVNKVIIAPNLYTDEINITPVYKPNYICPEVIILDANYINEKINVNINDLSIRYVWDNDGSDLILIANSEEDNQPQVKIRFVNVFKSDTAADKLSFNFSDKQDVSVSKIISTFSLAAYSDGFFDYEFGLVSLDNDYFYINSFGNMVSGLIYINDSLYYFKPPKNNLITGFTTIDGNKYYFDPTKSGAASIGEITIDGKDYYFNKQGILQVGVINTSDGLKYFAPAGTLDENLEGESVNFIGKLNIDGKIYYFEDNYRAAVEWKLLDDETYYFNPKTGEALKGLHQIGDNKYYFDDNGIMQTGFITINDKVFYFNNDGVMQVGYIEVNGKYFYFGKNGERQLGVFNTPDGFKFFGPKDDDLGTEEGELTLYNGILNFNGKIYFFDISNTAVVGWGTLDDGSTYYFDDNTAEACIGLTVINDCKYYFDDNGIRQLGFITINDNIFYFSESGKIELGYQNINGNYFYIDESGLVLIGVFDTPDGYKYFAPLNTVNDNIYGQAVKYSGLVRVNEDVYYFGETYKIETGWIENETDKYYFDPETKKAYKGINVVDDIKYYFDENGIMRTGLISFENNNYYFNEDGKMQFGYLNIKDKMFYFGKDGKMQIGVFNTPDGFKYFAHQNTLDENFEGESINYTGWLDLDGKRYYFTDEYIAATGSLTIDGYNYYFDPDTAELVVSE</sequence>
<organism>
    <name type="scientific">Paraclostridium sordellii (strain ATCC 9714 / DSM 2141 / JCM 3814 / LMG 15708 / NCIMB 10717 / 211)</name>
    <name type="common">Clostridium sordellii</name>
    <dbReference type="NCBI Taxonomy" id="1292036"/>
    <lineage>
        <taxon>Bacteria</taxon>
        <taxon>Bacillati</taxon>
        <taxon>Bacillota</taxon>
        <taxon>Clostridia</taxon>
        <taxon>Peptostreptococcales</taxon>
        <taxon>Peptostreptococcaceae</taxon>
        <taxon>Paraclostridium</taxon>
    </lineage>
</organism>
<reference key="1">
    <citation type="journal article" date="2013" name="J. Bacteriol.">
        <title>Identification and characterization of Clostridium sordellii toxin gene regulator.</title>
        <authorList>
            <person name="Sirigi Reddy A.R."/>
            <person name="Girinathan B.P."/>
            <person name="Zapotocny R."/>
            <person name="Govind R."/>
        </authorList>
    </citation>
    <scope>NUCLEOTIDE SEQUENCE [LARGE SCALE GENOMIC DNA]</scope>
    <source>
        <strain>ATCC 9714 / DSM 2141 / JCM 3814 / LMG 15708 / NCIMB 10717 / 211</strain>
    </source>
</reference>
<reference key="2">
    <citation type="journal article" date="2001" name="Infect. Immun.">
        <title>pH-enhanced cytopathic effects of Clostridium sordellii lethal toxin.</title>
        <authorList>
            <person name="Qa'Dan M."/>
            <person name="Spyres L.M."/>
            <person name="Ballard J.D."/>
        </authorList>
    </citation>
    <scope>FUNCTION (CYTOTOXIN-L)</scope>
    <source>
        <strain>ATCC 9714 / DSM 2141 / JCM 3814 / LMG 15708 / NCIMB 10717 / 211</strain>
    </source>
</reference>
<reference key="3">
    <citation type="journal article" date="2004" name="Infect. Immun.">
        <title>Clostridium sordellii lethal toxin is maintained in a multimeric protein complex.</title>
        <authorList>
            <person name="Voth D.E."/>
            <person name="Qa'Dan M."/>
            <person name="Hamm E.E."/>
            <person name="Pelfrey J.M."/>
            <person name="Ballard J.D."/>
        </authorList>
    </citation>
    <scope>SUBUNIT (CYTOTOXIN-L)</scope>
    <source>
        <strain>ATCC 9714 / DSM 2141 / JCM 3814 / LMG 15708 / NCIMB 10717 / 211</strain>
    </source>
</reference>
<reference key="4">
    <citation type="journal article" date="2010" name="Anaerobe">
        <title>Lethal toxin is a critical determinant of rapid mortality in rodent models of Clostridium sordellii endometritis.</title>
        <authorList>
            <person name="Hao Y."/>
            <person name="Senn T."/>
            <person name="Opp J.S."/>
            <person name="Young V.B."/>
            <person name="Thiele T."/>
            <person name="Srinivas G."/>
            <person name="Huang S.K."/>
            <person name="Aronoff D.M."/>
        </authorList>
    </citation>
    <scope>FUNCTION (CYTOTOXIN-L)</scope>
    <source>
        <strain>ATCC 9714 / DSM 2141 / JCM 3814 / LMG 15708 / NCIMB 10717 / 211</strain>
    </source>
</reference>
<reference key="5">
    <citation type="journal article" date="2011" name="Infect. Immun.">
        <title>TcsL is an essential virulence factor in Clostridium sordellii ATCC 9714.</title>
        <authorList>
            <person name="Carter G.P."/>
            <person name="Awad M.M."/>
            <person name="Hao Y."/>
            <person name="Thelen T."/>
            <person name="Bergin I.L."/>
            <person name="Howarth P.M."/>
            <person name="Seemann T."/>
            <person name="Rood J.I."/>
            <person name="Aronoff D.M."/>
            <person name="Lyras D."/>
        </authorList>
    </citation>
    <scope>FUNCTION (CYTOTOXIN-L)</scope>
    <scope>DISRUPTION PHENOTYPE</scope>
    <source>
        <strain>ATCC 9714 / DSM 2141 / JCM 3814 / LMG 15708 / NCIMB 10717 / 211</strain>
    </source>
</reference>
<dbReference type="EC" id="3.4.22.-" evidence="4"/>
<dbReference type="EC" id="2.4.1.-" evidence="4"/>
<dbReference type="EMBL" id="APWR01000088">
    <property type="protein sequence ID" value="EPZ61151.1"/>
    <property type="molecule type" value="Genomic_DNA"/>
</dbReference>
<dbReference type="PDB" id="8JB5">
    <property type="method" value="EM"/>
    <property type="resolution" value="2.90 A"/>
    <property type="chains" value="A=1-2364"/>
</dbReference>
<dbReference type="PDB" id="8X2H">
    <property type="method" value="EM"/>
    <property type="resolution" value="2.90 A"/>
    <property type="chains" value="A=1-2364"/>
</dbReference>
<dbReference type="PDB" id="8X2I">
    <property type="method" value="EM"/>
    <property type="resolution" value="2.50 A"/>
    <property type="chains" value="A=1-2364"/>
</dbReference>
<dbReference type="PDBsum" id="8JB5"/>
<dbReference type="PDBsum" id="8X2H"/>
<dbReference type="PDBsum" id="8X2I"/>
<dbReference type="EMDB" id="EMD-36141"/>
<dbReference type="EMDB" id="EMD-38010"/>
<dbReference type="EMDB" id="EMD-38011"/>
<dbReference type="SMR" id="T0D3N5"/>
<dbReference type="PATRIC" id="fig|1292036.3.peg.1017"/>
<dbReference type="GO" id="GO:0005576">
    <property type="term" value="C:extracellular region"/>
    <property type="evidence" value="ECO:0007669"/>
    <property type="project" value="UniProtKB-SubCell"/>
</dbReference>
<dbReference type="GO" id="GO:0044164">
    <property type="term" value="C:host cell cytosol"/>
    <property type="evidence" value="ECO:0007669"/>
    <property type="project" value="UniProtKB-SubCell"/>
</dbReference>
<dbReference type="GO" id="GO:0044175">
    <property type="term" value="C:host cell endosome membrane"/>
    <property type="evidence" value="ECO:0007669"/>
    <property type="project" value="UniProtKB-SubCell"/>
</dbReference>
<dbReference type="GO" id="GO:0020002">
    <property type="term" value="C:host cell plasma membrane"/>
    <property type="evidence" value="ECO:0007669"/>
    <property type="project" value="UniProtKB-SubCell"/>
</dbReference>
<dbReference type="GO" id="GO:0016020">
    <property type="term" value="C:membrane"/>
    <property type="evidence" value="ECO:0007669"/>
    <property type="project" value="UniProtKB-KW"/>
</dbReference>
<dbReference type="GO" id="GO:0008234">
    <property type="term" value="F:cysteine-type peptidase activity"/>
    <property type="evidence" value="ECO:0007669"/>
    <property type="project" value="UniProtKB-KW"/>
</dbReference>
<dbReference type="GO" id="GO:0016757">
    <property type="term" value="F:glycosyltransferase activity"/>
    <property type="evidence" value="ECO:0007669"/>
    <property type="project" value="UniProtKB-KW"/>
</dbReference>
<dbReference type="GO" id="GO:0008289">
    <property type="term" value="F:lipid binding"/>
    <property type="evidence" value="ECO:0007669"/>
    <property type="project" value="UniProtKB-KW"/>
</dbReference>
<dbReference type="GO" id="GO:0046872">
    <property type="term" value="F:metal ion binding"/>
    <property type="evidence" value="ECO:0007669"/>
    <property type="project" value="UniProtKB-KW"/>
</dbReference>
<dbReference type="GO" id="GO:0090729">
    <property type="term" value="F:toxin activity"/>
    <property type="evidence" value="ECO:0000315"/>
    <property type="project" value="UniProtKB"/>
</dbReference>
<dbReference type="GO" id="GO:0006508">
    <property type="term" value="P:proteolysis"/>
    <property type="evidence" value="ECO:0007669"/>
    <property type="project" value="UniProtKB-KW"/>
</dbReference>
<dbReference type="CDD" id="cd20502">
    <property type="entry name" value="C80_toxinA_B-like"/>
    <property type="match status" value="1"/>
</dbReference>
<dbReference type="CDD" id="cd16840">
    <property type="entry name" value="toxin_MLD"/>
    <property type="match status" value="1"/>
</dbReference>
<dbReference type="Gene3D" id="1.10.10.1780">
    <property type="match status" value="1"/>
</dbReference>
<dbReference type="Gene3D" id="1.10.274.80">
    <property type="match status" value="1"/>
</dbReference>
<dbReference type="Gene3D" id="1.10.3730.30">
    <property type="match status" value="1"/>
</dbReference>
<dbReference type="Gene3D" id="1.20.58.1190">
    <property type="match status" value="1"/>
</dbReference>
<dbReference type="Gene3D" id="3.40.50.11050">
    <property type="match status" value="1"/>
</dbReference>
<dbReference type="Gene3D" id="2.10.270.10">
    <property type="entry name" value="Cholin Binding"/>
    <property type="match status" value="6"/>
</dbReference>
<dbReference type="InterPro" id="IPR018337">
    <property type="entry name" value="Cell_wall/Cho-bd_repeat"/>
</dbReference>
<dbReference type="InterPro" id="IPR020974">
    <property type="entry name" value="CPD_dom"/>
</dbReference>
<dbReference type="InterPro" id="IPR038383">
    <property type="entry name" value="CPD_dom_sf"/>
</dbReference>
<dbReference type="InterPro" id="IPR020972">
    <property type="entry name" value="Dermonecrotic/RTX_toxin_MLD"/>
</dbReference>
<dbReference type="InterPro" id="IPR029044">
    <property type="entry name" value="Nucleotide-diphossugar_trans"/>
</dbReference>
<dbReference type="InterPro" id="IPR024770">
    <property type="entry name" value="TcdA/TcdB_cat"/>
</dbReference>
<dbReference type="InterPro" id="IPR024772">
    <property type="entry name" value="TcdA/TcdB_N"/>
</dbReference>
<dbReference type="InterPro" id="IPR024769">
    <property type="entry name" value="TcdA/TcdB_pore_forming"/>
</dbReference>
<dbReference type="Pfam" id="PF01473">
    <property type="entry name" value="Choline_bind_1"/>
    <property type="match status" value="7"/>
</dbReference>
<dbReference type="Pfam" id="PF19127">
    <property type="entry name" value="Choline_bind_3"/>
    <property type="match status" value="1"/>
</dbReference>
<dbReference type="Pfam" id="PF11647">
    <property type="entry name" value="MLD"/>
    <property type="match status" value="1"/>
</dbReference>
<dbReference type="Pfam" id="PF11713">
    <property type="entry name" value="Peptidase_C80"/>
    <property type="match status" value="1"/>
</dbReference>
<dbReference type="Pfam" id="PF12919">
    <property type="entry name" value="TcdA_TcdB"/>
    <property type="match status" value="1"/>
</dbReference>
<dbReference type="Pfam" id="PF12920">
    <property type="entry name" value="TcdA_TcdB_pore"/>
    <property type="match status" value="1"/>
</dbReference>
<dbReference type="Pfam" id="PF12918">
    <property type="entry name" value="TcdB_N"/>
    <property type="match status" value="1"/>
</dbReference>
<dbReference type="SUPFAM" id="SSF69360">
    <property type="entry name" value="Cell wall binding repeat"/>
    <property type="match status" value="4"/>
</dbReference>
<dbReference type="SUPFAM" id="SSF53448">
    <property type="entry name" value="Nucleotide-diphospho-sugar transferases"/>
    <property type="match status" value="1"/>
</dbReference>
<dbReference type="PROSITE" id="PS51771">
    <property type="entry name" value="CGT_MARTX_CPD"/>
    <property type="match status" value="1"/>
</dbReference>
<dbReference type="PROSITE" id="PS51170">
    <property type="entry name" value="CW"/>
    <property type="match status" value="20"/>
</dbReference>
<evidence type="ECO:0000250" key="1">
    <source>
        <dbReference type="UniProtKB" id="P0DUB4"/>
    </source>
</evidence>
<evidence type="ECO:0000250" key="2">
    <source>
        <dbReference type="UniProtKB" id="P16154"/>
    </source>
</evidence>
<evidence type="ECO:0000250" key="3">
    <source>
        <dbReference type="UniProtKB" id="P18177"/>
    </source>
</evidence>
<evidence type="ECO:0000250" key="4">
    <source>
        <dbReference type="UniProtKB" id="Q46342"/>
    </source>
</evidence>
<evidence type="ECO:0000255" key="5"/>
<evidence type="ECO:0000255" key="6">
    <source>
        <dbReference type="PROSITE-ProRule" id="PRU00591"/>
    </source>
</evidence>
<evidence type="ECO:0000255" key="7">
    <source>
        <dbReference type="PROSITE-ProRule" id="PRU01107"/>
    </source>
</evidence>
<evidence type="ECO:0000269" key="8">
    <source>
    </source>
</evidence>
<evidence type="ECO:0000269" key="9">
    <source>
    </source>
</evidence>
<evidence type="ECO:0000269" key="10">
    <source>
    </source>
</evidence>
<evidence type="ECO:0000269" key="11">
    <source>
    </source>
</evidence>
<evidence type="ECO:0000303" key="12">
    <source>
    </source>
</evidence>
<evidence type="ECO:0000303" key="13">
    <source>
    </source>
</evidence>
<evidence type="ECO:0000305" key="14"/>
<evidence type="ECO:0000312" key="15">
    <source>
        <dbReference type="EMBL" id="EPZ61151.1"/>
    </source>
</evidence>
<evidence type="ECO:0007829" key="16">
    <source>
        <dbReference type="PDB" id="8JB5"/>
    </source>
</evidence>
<proteinExistence type="evidence at protein level"/>
<keyword id="KW-0002">3D-structure</keyword>
<keyword id="KW-0068">Autocatalytic cleavage</keyword>
<keyword id="KW-0328">Glycosyltransferase</keyword>
<keyword id="KW-1032">Host cell membrane</keyword>
<keyword id="KW-1035">Host cytoplasm</keyword>
<keyword id="KW-1039">Host endosome</keyword>
<keyword id="KW-1043">Host membrane</keyword>
<keyword id="KW-0378">Hydrolase</keyword>
<keyword id="KW-0446">Lipid-binding</keyword>
<keyword id="KW-0460">Magnesium</keyword>
<keyword id="KW-0464">Manganese</keyword>
<keyword id="KW-0472">Membrane</keyword>
<keyword id="KW-0479">Metal-binding</keyword>
<keyword id="KW-0645">Protease</keyword>
<keyword id="KW-0677">Repeat</keyword>
<keyword id="KW-0964">Secreted</keyword>
<keyword id="KW-0788">Thiol protease</keyword>
<keyword id="KW-0800">Toxin</keyword>
<keyword id="KW-0808">Transferase</keyword>
<keyword id="KW-0843">Virulence</keyword>
<keyword id="KW-0862">Zinc</keyword>
<name>TCSL3_PARS9</name>
<feature type="chain" id="PRO_0000451201" description="Cytotoxin-L">
    <location>
        <begin position="1"/>
        <end position="2364"/>
    </location>
</feature>
<feature type="chain" id="PRO_0000451202" description="Glucosyltransferase TcsL" evidence="3">
    <location>
        <begin position="1"/>
        <end position="543"/>
    </location>
</feature>
<feature type="domain" description="GT44" evidence="5">
    <location>
        <begin position="96"/>
        <end position="468"/>
    </location>
</feature>
<feature type="domain" description="Peptidase C80" evidence="7">
    <location>
        <begin position="567"/>
        <end position="774"/>
    </location>
</feature>
<feature type="repeat" description="Cell wall-binding 1" evidence="6">
    <location>
        <begin position="1813"/>
        <end position="1832"/>
    </location>
</feature>
<feature type="repeat" description="Cell wall-binding 2" evidence="6">
    <location>
        <begin position="1833"/>
        <end position="1852"/>
    </location>
</feature>
<feature type="repeat" description="Cell wall-binding 3" evidence="6">
    <location>
        <begin position="1854"/>
        <end position="1873"/>
    </location>
</feature>
<feature type="repeat" description="Cell wall-binding 4" evidence="6">
    <location>
        <begin position="1876"/>
        <end position="1895"/>
    </location>
</feature>
<feature type="repeat" description="Cell wall-binding 5" evidence="6">
    <location>
        <begin position="1926"/>
        <end position="1945"/>
    </location>
</feature>
<feature type="repeat" description="Cell wall-binding 6" evidence="6">
    <location>
        <begin position="1946"/>
        <end position="1965"/>
    </location>
</feature>
<feature type="repeat" description="Cell wall-binding 7" evidence="6">
    <location>
        <begin position="1967"/>
        <end position="1986"/>
    </location>
</feature>
<feature type="repeat" description="Cell wall-binding 8" evidence="6">
    <location>
        <begin position="1987"/>
        <end position="2006"/>
    </location>
</feature>
<feature type="repeat" description="Cell wall-binding 9" evidence="6">
    <location>
        <begin position="2007"/>
        <end position="2026"/>
    </location>
</feature>
<feature type="repeat" description="Cell wall-binding 10" evidence="6">
    <location>
        <begin position="2057"/>
        <end position="2076"/>
    </location>
</feature>
<feature type="repeat" description="Cell wall-binding 11" evidence="6">
    <location>
        <begin position="2077"/>
        <end position="2097"/>
    </location>
</feature>
<feature type="repeat" description="Cell wall-binding 12" evidence="6">
    <location>
        <begin position="2099"/>
        <end position="2118"/>
    </location>
</feature>
<feature type="repeat" description="Cell wall-binding 13" evidence="6">
    <location>
        <begin position="2119"/>
        <end position="2138"/>
    </location>
</feature>
<feature type="repeat" description="Cell wall-binding 14" evidence="6">
    <location>
        <begin position="2139"/>
        <end position="2158"/>
    </location>
</feature>
<feature type="repeat" description="Cell wall-binding 15" evidence="6">
    <location>
        <begin position="2209"/>
        <end position="2224"/>
    </location>
</feature>
<feature type="repeat" description="Cell wall-binding 16" evidence="6">
    <location>
        <begin position="2227"/>
        <end position="2249"/>
    </location>
</feature>
<feature type="repeat" description="Cell wall-binding 17" evidence="6">
    <location>
        <begin position="2250"/>
        <end position="2269"/>
    </location>
</feature>
<feature type="repeat" description="Cell wall-binding 18" evidence="6">
    <location>
        <begin position="2270"/>
        <end position="2289"/>
    </location>
</feature>
<feature type="repeat" description="Cell wall-binding 19" evidence="6">
    <location>
        <begin position="2320"/>
        <end position="2339"/>
    </location>
</feature>
<feature type="repeat" description="Cell wall-binding 20" evidence="6">
    <location>
        <begin position="2340"/>
        <end position="2359"/>
    </location>
</feature>
<feature type="region of interest" description="Four-helical bundle" evidence="4">
    <location>
        <begin position="1"/>
        <end position="91"/>
    </location>
</feature>
<feature type="region of interest" description="Glucosyltransferase region" evidence="4">
    <location>
        <begin position="96"/>
        <end position="468"/>
    </location>
</feature>
<feature type="region of interest" description="Autoprocessing region" evidence="4">
    <location>
        <begin position="544"/>
        <end position="799"/>
    </location>
</feature>
<feature type="region of interest" description="Translocation region" evidence="4">
    <location>
        <begin position="800"/>
        <end position="1500"/>
    </location>
</feature>
<feature type="region of interest" description="Interaction with host SEMA6A and SEMA6B" evidence="1">
    <location>
        <begin position="1433"/>
        <end position="1438"/>
    </location>
</feature>
<feature type="region of interest" description="Interaction with host SEMA6A and SEMA6B" evidence="1">
    <location>
        <begin position="1466"/>
        <end position="1471"/>
    </location>
</feature>
<feature type="region of interest" description="Interaction with host SEMA6A and SEMA6B" evidence="1">
    <location>
        <begin position="1484"/>
        <end position="1495"/>
    </location>
</feature>
<feature type="region of interest" description="Interaction with host SEMA6A and SEMA6B" evidence="1">
    <location>
        <begin position="1504"/>
        <end position="1511"/>
    </location>
</feature>
<feature type="region of interest" description="Interaction with host SEMA6A and SEMA6B" evidence="1">
    <location>
        <begin position="1596"/>
        <end position="1601"/>
    </location>
</feature>
<feature type="region of interest" description="Receptor-binding (CROPS) region" evidence="4">
    <location>
        <begin position="1835"/>
        <end position="2364"/>
    </location>
</feature>
<feature type="active site" description="For protease activity" evidence="7">
    <location>
        <position position="653"/>
    </location>
</feature>
<feature type="active site" description="Nucleophile; for protease activity" evidence="7">
    <location>
        <position position="698"/>
    </location>
</feature>
<feature type="binding site" evidence="4">
    <location>
        <begin position="101"/>
        <end position="103"/>
    </location>
    <ligand>
        <name>UDP-alpha-D-glucose</name>
        <dbReference type="ChEBI" id="CHEBI:58885"/>
    </ligand>
</feature>
<feature type="binding site" evidence="4">
    <location>
        <position position="139"/>
    </location>
    <ligand>
        <name>UDP-alpha-D-glucose</name>
        <dbReference type="ChEBI" id="CHEBI:58885"/>
    </ligand>
</feature>
<feature type="binding site" evidence="4">
    <location>
        <begin position="265"/>
        <end position="270"/>
    </location>
    <ligand>
        <name>UDP-alpha-D-glucose</name>
        <dbReference type="ChEBI" id="CHEBI:58885"/>
    </ligand>
</feature>
<feature type="binding site" evidence="4">
    <location>
        <begin position="286"/>
        <end position="288"/>
    </location>
    <ligand>
        <name>UDP-alpha-D-glucose</name>
        <dbReference type="ChEBI" id="CHEBI:58885"/>
    </ligand>
</feature>
<feature type="binding site" evidence="4">
    <location>
        <position position="288"/>
    </location>
    <ligand>
        <name>Mg(2+)</name>
        <dbReference type="ChEBI" id="CHEBI:18420"/>
    </ligand>
</feature>
<feature type="binding site" evidence="4">
    <location>
        <position position="515"/>
    </location>
    <ligand>
        <name>Mg(2+)</name>
        <dbReference type="ChEBI" id="CHEBI:18420"/>
    </ligand>
</feature>
<feature type="binding site" evidence="4">
    <location>
        <begin position="518"/>
        <end position="520"/>
    </location>
    <ligand>
        <name>UDP-alpha-D-glucose</name>
        <dbReference type="ChEBI" id="CHEBI:58885"/>
    </ligand>
</feature>
<feature type="binding site" evidence="4">
    <location>
        <position position="518"/>
    </location>
    <ligand>
        <name>Mg(2+)</name>
        <dbReference type="ChEBI" id="CHEBI:18420"/>
    </ligand>
</feature>
<feature type="binding site" evidence="2">
    <location>
        <position position="545"/>
    </location>
    <ligand>
        <name>Zn(2+)</name>
        <dbReference type="ChEBI" id="CHEBI:29105"/>
    </ligand>
</feature>
<feature type="binding site" evidence="3">
    <location>
        <position position="546"/>
    </location>
    <ligand>
        <name>Zn(2+)</name>
        <dbReference type="ChEBI" id="CHEBI:29105"/>
    </ligand>
</feature>
<feature type="binding site" evidence="2">
    <location>
        <position position="577"/>
    </location>
    <ligand>
        <name>1D-myo-inositol hexakisphosphate</name>
        <dbReference type="ChEBI" id="CHEBI:58130"/>
    </ligand>
</feature>
<feature type="binding site" evidence="2">
    <location>
        <position position="600"/>
    </location>
    <ligand>
        <name>1D-myo-inositol hexakisphosphate</name>
        <dbReference type="ChEBI" id="CHEBI:58130"/>
    </ligand>
</feature>
<feature type="binding site" evidence="2">
    <location>
        <position position="647"/>
    </location>
    <ligand>
        <name>1D-myo-inositol hexakisphosphate</name>
        <dbReference type="ChEBI" id="CHEBI:58130"/>
    </ligand>
</feature>
<feature type="binding site" evidence="3">
    <location>
        <position position="653"/>
    </location>
    <ligand>
        <name>Zn(2+)</name>
        <dbReference type="ChEBI" id="CHEBI:29105"/>
    </ligand>
</feature>
<feature type="binding site" evidence="3">
    <location>
        <position position="757"/>
    </location>
    <ligand>
        <name>Zn(2+)</name>
        <dbReference type="ChEBI" id="CHEBI:29105"/>
    </ligand>
</feature>
<feature type="binding site" evidence="2">
    <location>
        <position position="764"/>
    </location>
    <ligand>
        <name>1D-myo-inositol hexakisphosphate</name>
        <dbReference type="ChEBI" id="CHEBI:58130"/>
    </ligand>
</feature>
<feature type="binding site" evidence="2">
    <location>
        <position position="775"/>
    </location>
    <ligand>
        <name>1D-myo-inositol hexakisphosphate</name>
        <dbReference type="ChEBI" id="CHEBI:58130"/>
    </ligand>
</feature>
<feature type="binding site" evidence="2">
    <location>
        <position position="792"/>
    </location>
    <ligand>
        <name>1D-myo-inositol hexakisphosphate</name>
        <dbReference type="ChEBI" id="CHEBI:58130"/>
    </ligand>
</feature>
<feature type="site" description="Cleavage; by autolysis" evidence="3">
    <location>
        <begin position="543"/>
        <end position="544"/>
    </location>
</feature>
<feature type="helix" evidence="16">
    <location>
        <begin position="6"/>
        <end position="12"/>
    </location>
</feature>
<feature type="helix" evidence="16">
    <location>
        <begin position="22"/>
        <end position="35"/>
    </location>
</feature>
<feature type="helix" evidence="16">
    <location>
        <begin position="42"/>
        <end position="62"/>
    </location>
</feature>
<feature type="turn" evidence="16">
    <location>
        <begin position="63"/>
        <end position="65"/>
    </location>
</feature>
<feature type="strand" evidence="16">
    <location>
        <begin position="66"/>
        <end position="68"/>
    </location>
</feature>
<feature type="helix" evidence="16">
    <location>
        <begin position="69"/>
        <end position="86"/>
    </location>
</feature>
<feature type="turn" evidence="16">
    <location>
        <begin position="87"/>
        <end position="89"/>
    </location>
</feature>
<feature type="strand" evidence="16">
    <location>
        <begin position="97"/>
        <end position="101"/>
    </location>
</feature>
<feature type="helix" evidence="16">
    <location>
        <begin position="109"/>
        <end position="121"/>
    </location>
</feature>
<feature type="strand" evidence="16">
    <location>
        <begin position="125"/>
        <end position="131"/>
    </location>
</feature>
<feature type="helix" evidence="16">
    <location>
        <begin position="138"/>
        <end position="155"/>
    </location>
</feature>
<feature type="helix" evidence="16">
    <location>
        <begin position="168"/>
        <end position="196"/>
    </location>
</feature>
<feature type="helix" evidence="16">
    <location>
        <begin position="202"/>
        <end position="213"/>
    </location>
</feature>
<feature type="helix" evidence="16">
    <location>
        <begin position="218"/>
        <end position="233"/>
    </location>
</feature>
<feature type="turn" evidence="16">
    <location>
        <begin position="234"/>
        <end position="236"/>
    </location>
</feature>
<feature type="strand" evidence="16">
    <location>
        <begin position="237"/>
        <end position="239"/>
    </location>
</feature>
<feature type="strand" evidence="16">
    <location>
        <begin position="244"/>
        <end position="246"/>
    </location>
</feature>
<feature type="helix" evidence="16">
    <location>
        <begin position="249"/>
        <end position="260"/>
    </location>
</feature>
<feature type="helix" evidence="16">
    <location>
        <begin position="265"/>
        <end position="279"/>
    </location>
</feature>
<feature type="strand" evidence="16">
    <location>
        <begin position="282"/>
        <end position="285"/>
    </location>
</feature>
<feature type="strand" evidence="16">
    <location>
        <begin position="290"/>
        <end position="293"/>
    </location>
</feature>
<feature type="helix" evidence="16">
    <location>
        <begin position="309"/>
        <end position="323"/>
    </location>
</feature>
<feature type="turn" evidence="16">
    <location>
        <begin position="333"/>
        <end position="337"/>
    </location>
</feature>
<feature type="helix" evidence="16">
    <location>
        <begin position="340"/>
        <end position="352"/>
    </location>
</feature>
<feature type="helix" evidence="16">
    <location>
        <begin position="356"/>
        <end position="358"/>
    </location>
</feature>
<feature type="strand" evidence="16">
    <location>
        <begin position="374"/>
        <end position="378"/>
    </location>
</feature>
<feature type="strand" evidence="16">
    <location>
        <begin position="381"/>
        <end position="389"/>
    </location>
</feature>
<feature type="helix" evidence="16">
    <location>
        <begin position="394"/>
        <end position="419"/>
    </location>
</feature>
<feature type="helix" evidence="16">
    <location>
        <begin position="424"/>
        <end position="437"/>
    </location>
</feature>
<feature type="strand" evidence="16">
    <location>
        <begin position="441"/>
        <end position="443"/>
    </location>
</feature>
<feature type="helix" evidence="16">
    <location>
        <begin position="444"/>
        <end position="449"/>
    </location>
</feature>
<feature type="turn" evidence="16">
    <location>
        <begin position="450"/>
        <end position="452"/>
    </location>
</feature>
<feature type="helix" evidence="16">
    <location>
        <begin position="453"/>
        <end position="455"/>
    </location>
</feature>
<feature type="turn" evidence="16">
    <location>
        <begin position="456"/>
        <end position="458"/>
    </location>
</feature>
<feature type="strand" evidence="16">
    <location>
        <begin position="459"/>
        <end position="461"/>
    </location>
</feature>
<feature type="helix" evidence="16">
    <location>
        <begin position="465"/>
        <end position="468"/>
    </location>
</feature>
<feature type="helix" evidence="16">
    <location>
        <begin position="471"/>
        <end position="483"/>
    </location>
</feature>
<feature type="helix" evidence="16">
    <location>
        <begin position="495"/>
        <end position="498"/>
    </location>
</feature>
<feature type="helix" evidence="16">
    <location>
        <begin position="499"/>
        <end position="501"/>
    </location>
</feature>
<feature type="helix" evidence="16">
    <location>
        <begin position="505"/>
        <end position="507"/>
    </location>
</feature>
<feature type="helix" evidence="16">
    <location>
        <begin position="513"/>
        <end position="518"/>
    </location>
</feature>
<feature type="helix" evidence="16">
    <location>
        <begin position="524"/>
        <end position="538"/>
    </location>
</feature>
<feature type="strand" evidence="16">
    <location>
        <begin position="539"/>
        <end position="541"/>
    </location>
</feature>
<feature type="turn" evidence="16">
    <location>
        <begin position="545"/>
        <end position="548"/>
    </location>
</feature>
<feature type="helix" evidence="16">
    <location>
        <begin position="559"/>
        <end position="567"/>
    </location>
</feature>
<feature type="strand" evidence="16">
    <location>
        <begin position="578"/>
        <end position="583"/>
    </location>
</feature>
<feature type="helix" evidence="16">
    <location>
        <begin position="588"/>
        <end position="600"/>
    </location>
</feature>
<feature type="helix" evidence="16">
    <location>
        <begin position="602"/>
        <end position="604"/>
    </location>
</feature>
<feature type="strand" evidence="16">
    <location>
        <begin position="605"/>
        <end position="614"/>
    </location>
</feature>
<feature type="strand" evidence="16">
    <location>
        <begin position="617"/>
        <end position="622"/>
    </location>
</feature>
<feature type="turn" evidence="16">
    <location>
        <begin position="623"/>
        <end position="626"/>
    </location>
</feature>
<feature type="strand" evidence="16">
    <location>
        <begin position="627"/>
        <end position="634"/>
    </location>
</feature>
<feature type="helix" evidence="16">
    <location>
        <begin position="638"/>
        <end position="641"/>
    </location>
</feature>
<feature type="strand" evidence="16">
    <location>
        <begin position="644"/>
        <end position="651"/>
    </location>
</feature>
<feature type="helix" evidence="16">
    <location>
        <begin position="668"/>
        <end position="682"/>
    </location>
</feature>
<feature type="turn" evidence="16">
    <location>
        <begin position="683"/>
        <end position="685"/>
    </location>
</feature>
<feature type="strand" evidence="16">
    <location>
        <begin position="689"/>
        <end position="697"/>
    </location>
</feature>
<feature type="strand" evidence="16">
    <location>
        <begin position="704"/>
        <end position="706"/>
    </location>
</feature>
<feature type="helix" evidence="16">
    <location>
        <begin position="707"/>
        <end position="709"/>
    </location>
</feature>
<feature type="helix" evidence="16">
    <location>
        <begin position="711"/>
        <end position="726"/>
    </location>
</feature>
<feature type="helix" evidence="16">
    <location>
        <begin position="732"/>
        <end position="734"/>
    </location>
</feature>
<feature type="strand" evidence="16">
    <location>
        <begin position="735"/>
        <end position="741"/>
    </location>
</feature>
<feature type="strand" evidence="16">
    <location>
        <begin position="744"/>
        <end position="746"/>
    </location>
</feature>
<feature type="strand" evidence="16">
    <location>
        <begin position="752"/>
        <end position="755"/>
    </location>
</feature>
<feature type="helix" evidence="16">
    <location>
        <begin position="765"/>
        <end position="774"/>
    </location>
</feature>
<feature type="strand" evidence="16">
    <location>
        <begin position="777"/>
        <end position="781"/>
    </location>
</feature>
<feature type="turn" evidence="16">
    <location>
        <begin position="782"/>
        <end position="785"/>
    </location>
</feature>
<feature type="strand" evidence="16">
    <location>
        <begin position="786"/>
        <end position="790"/>
    </location>
</feature>
<feature type="helix" evidence="16">
    <location>
        <begin position="794"/>
        <end position="808"/>
    </location>
</feature>
<feature type="helix" evidence="16">
    <location>
        <begin position="815"/>
        <end position="838"/>
    </location>
</feature>
<feature type="helix" evidence="16">
    <location>
        <begin position="850"/>
        <end position="875"/>
    </location>
</feature>
<feature type="strand" evidence="16">
    <location>
        <begin position="882"/>
        <end position="884"/>
    </location>
</feature>
<feature type="strand" evidence="16">
    <location>
        <begin position="890"/>
        <end position="892"/>
    </location>
</feature>
<feature type="strand" evidence="16">
    <location>
        <begin position="895"/>
        <end position="902"/>
    </location>
</feature>
<feature type="turn" evidence="16">
    <location>
        <begin position="903"/>
        <end position="905"/>
    </location>
</feature>
<feature type="strand" evidence="16">
    <location>
        <begin position="908"/>
        <end position="913"/>
    </location>
</feature>
<feature type="helix" evidence="16">
    <location>
        <begin position="917"/>
        <end position="935"/>
    </location>
</feature>
<feature type="strand" evidence="16">
    <location>
        <begin position="938"/>
        <end position="940"/>
    </location>
</feature>
<feature type="strand" evidence="16">
    <location>
        <begin position="943"/>
        <end position="945"/>
    </location>
</feature>
<feature type="helix" evidence="16">
    <location>
        <begin position="955"/>
        <end position="970"/>
    </location>
</feature>
<feature type="turn" evidence="16">
    <location>
        <begin position="971"/>
        <end position="973"/>
    </location>
</feature>
<feature type="strand" evidence="16">
    <location>
        <begin position="976"/>
        <end position="978"/>
    </location>
</feature>
<feature type="helix" evidence="16">
    <location>
        <begin position="979"/>
        <end position="994"/>
    </location>
</feature>
<feature type="helix" evidence="16">
    <location>
        <begin position="998"/>
        <end position="1000"/>
    </location>
</feature>
<feature type="helix" evidence="16">
    <location>
        <begin position="1004"/>
        <end position="1016"/>
    </location>
</feature>
<feature type="strand" evidence="16">
    <location>
        <begin position="1028"/>
        <end position="1030"/>
    </location>
</feature>
<feature type="helix" evidence="16">
    <location>
        <begin position="1043"/>
        <end position="1050"/>
    </location>
</feature>
<feature type="helix" evidence="16">
    <location>
        <begin position="1054"/>
        <end position="1064"/>
    </location>
</feature>
<feature type="helix" evidence="16">
    <location>
        <begin position="1073"/>
        <end position="1086"/>
    </location>
</feature>
<feature type="strand" evidence="16">
    <location>
        <begin position="1089"/>
        <end position="1091"/>
    </location>
</feature>
<feature type="strand" evidence="16">
    <location>
        <begin position="1105"/>
        <end position="1107"/>
    </location>
</feature>
<feature type="strand" evidence="16">
    <location>
        <begin position="1110"/>
        <end position="1112"/>
    </location>
</feature>
<feature type="helix" evidence="16">
    <location>
        <begin position="1117"/>
        <end position="1132"/>
    </location>
</feature>
<feature type="strand" evidence="16">
    <location>
        <begin position="1135"/>
        <end position="1139"/>
    </location>
</feature>
<feature type="turn" evidence="16">
    <location>
        <begin position="1140"/>
        <end position="1142"/>
    </location>
</feature>
<feature type="strand" evidence="16">
    <location>
        <begin position="1143"/>
        <end position="1146"/>
    </location>
</feature>
<feature type="strand" evidence="16">
    <location>
        <begin position="1152"/>
        <end position="1156"/>
    </location>
</feature>
<feature type="turn" evidence="16">
    <location>
        <begin position="1157"/>
        <end position="1160"/>
    </location>
</feature>
<feature type="strand" evidence="16">
    <location>
        <begin position="1161"/>
        <end position="1164"/>
    </location>
</feature>
<feature type="strand" evidence="16">
    <location>
        <begin position="1167"/>
        <end position="1169"/>
    </location>
</feature>
<feature type="strand" evidence="16">
    <location>
        <begin position="1171"/>
        <end position="1173"/>
    </location>
</feature>
<feature type="strand" evidence="16">
    <location>
        <begin position="1179"/>
        <end position="1181"/>
    </location>
</feature>
<feature type="strand" evidence="16">
    <location>
        <begin position="1184"/>
        <end position="1186"/>
    </location>
</feature>
<feature type="strand" evidence="16">
    <location>
        <begin position="1192"/>
        <end position="1194"/>
    </location>
</feature>
<feature type="strand" evidence="16">
    <location>
        <begin position="1200"/>
        <end position="1202"/>
    </location>
</feature>
<feature type="helix" evidence="16">
    <location>
        <begin position="1203"/>
        <end position="1205"/>
    </location>
</feature>
<feature type="strand" evidence="16">
    <location>
        <begin position="1218"/>
        <end position="1221"/>
    </location>
</feature>
<feature type="strand" evidence="16">
    <location>
        <begin position="1227"/>
        <end position="1236"/>
    </location>
</feature>
<feature type="helix" evidence="16">
    <location>
        <begin position="1246"/>
        <end position="1257"/>
    </location>
</feature>
<feature type="turn" evidence="16">
    <location>
        <begin position="1258"/>
        <end position="1261"/>
    </location>
</feature>
<feature type="strand" evidence="16">
    <location>
        <begin position="1265"/>
        <end position="1267"/>
    </location>
</feature>
<feature type="strand" evidence="16">
    <location>
        <begin position="1269"/>
        <end position="1283"/>
    </location>
</feature>
<feature type="strand" evidence="16">
    <location>
        <begin position="1287"/>
        <end position="1290"/>
    </location>
</feature>
<feature type="strand" evidence="16">
    <location>
        <begin position="1296"/>
        <end position="1299"/>
    </location>
</feature>
<feature type="helix" evidence="16">
    <location>
        <begin position="1306"/>
        <end position="1309"/>
    </location>
</feature>
<feature type="strand" evidence="16">
    <location>
        <begin position="1314"/>
        <end position="1317"/>
    </location>
</feature>
<feature type="strand" evidence="16">
    <location>
        <begin position="1322"/>
        <end position="1325"/>
    </location>
</feature>
<feature type="strand" evidence="16">
    <location>
        <begin position="1334"/>
        <end position="1338"/>
    </location>
</feature>
<feature type="strand" evidence="16">
    <location>
        <begin position="1343"/>
        <end position="1347"/>
    </location>
</feature>
<feature type="helix" evidence="16">
    <location>
        <begin position="1349"/>
        <end position="1352"/>
    </location>
</feature>
<feature type="strand" evidence="16">
    <location>
        <begin position="1353"/>
        <end position="1358"/>
    </location>
</feature>
<feature type="strand" evidence="16">
    <location>
        <begin position="1361"/>
        <end position="1367"/>
    </location>
</feature>
<feature type="helix" evidence="16">
    <location>
        <begin position="1371"/>
        <end position="1373"/>
    </location>
</feature>
<feature type="strand" evidence="16">
    <location>
        <begin position="1374"/>
        <end position="1377"/>
    </location>
</feature>
<feature type="strand" evidence="16">
    <location>
        <begin position="1379"/>
        <end position="1386"/>
    </location>
</feature>
<feature type="strand" evidence="16">
    <location>
        <begin position="1388"/>
        <end position="1393"/>
    </location>
</feature>
<feature type="turn" evidence="16">
    <location>
        <begin position="1397"/>
        <end position="1399"/>
    </location>
</feature>
<feature type="strand" evidence="16">
    <location>
        <begin position="1401"/>
        <end position="1411"/>
    </location>
</feature>
<feature type="strand" evidence="16">
    <location>
        <begin position="1413"/>
        <end position="1422"/>
    </location>
</feature>
<feature type="strand" evidence="16">
    <location>
        <begin position="1425"/>
        <end position="1431"/>
    </location>
</feature>
<feature type="helix" evidence="16">
    <location>
        <begin position="1433"/>
        <end position="1438"/>
    </location>
</feature>
<feature type="helix" evidence="16">
    <location>
        <begin position="1440"/>
        <end position="1449"/>
    </location>
</feature>
<feature type="strand" evidence="16">
    <location>
        <begin position="1459"/>
        <end position="1466"/>
    </location>
</feature>
<feature type="strand" evidence="16">
    <location>
        <begin position="1469"/>
        <end position="1476"/>
    </location>
</feature>
<feature type="turn" evidence="16">
    <location>
        <begin position="1477"/>
        <end position="1480"/>
    </location>
</feature>
<feature type="strand" evidence="16">
    <location>
        <begin position="1481"/>
        <end position="1487"/>
    </location>
</feature>
<feature type="strand" evidence="16">
    <location>
        <begin position="1492"/>
        <end position="1501"/>
    </location>
</feature>
<feature type="strand" evidence="16">
    <location>
        <begin position="1506"/>
        <end position="1512"/>
    </location>
</feature>
<feature type="strand" evidence="16">
    <location>
        <begin position="1514"/>
        <end position="1521"/>
    </location>
</feature>
<feature type="strand" evidence="16">
    <location>
        <begin position="1524"/>
        <end position="1533"/>
    </location>
</feature>
<feature type="strand" evidence="16">
    <location>
        <begin position="1536"/>
        <end position="1544"/>
    </location>
</feature>
<feature type="strand" evidence="16">
    <location>
        <begin position="1546"/>
        <end position="1557"/>
    </location>
</feature>
<feature type="helix" evidence="16">
    <location>
        <begin position="1559"/>
        <end position="1571"/>
    </location>
</feature>
<feature type="turn" evidence="16">
    <location>
        <begin position="1573"/>
        <end position="1577"/>
    </location>
</feature>
<feature type="helix" evidence="16">
    <location>
        <begin position="1581"/>
        <end position="1588"/>
    </location>
</feature>
<feature type="strand" evidence="16">
    <location>
        <begin position="1591"/>
        <end position="1594"/>
    </location>
</feature>
<feature type="strand" evidence="16">
    <location>
        <begin position="1596"/>
        <end position="1601"/>
    </location>
</feature>
<feature type="strand" evidence="16">
    <location>
        <begin position="1604"/>
        <end position="1617"/>
    </location>
</feature>
<feature type="strand" evidence="16">
    <location>
        <begin position="1620"/>
        <end position="1626"/>
    </location>
</feature>
<feature type="strand" evidence="16">
    <location>
        <begin position="1632"/>
        <end position="1641"/>
    </location>
</feature>
<feature type="strand" evidence="16">
    <location>
        <begin position="1644"/>
        <end position="1649"/>
    </location>
</feature>
<feature type="helix" evidence="16">
    <location>
        <begin position="1650"/>
        <end position="1652"/>
    </location>
</feature>
<feature type="strand" evidence="16">
    <location>
        <begin position="1656"/>
        <end position="1660"/>
    </location>
</feature>
<feature type="strand" evidence="16">
    <location>
        <begin position="1668"/>
        <end position="1671"/>
    </location>
</feature>
<feature type="strand" evidence="16">
    <location>
        <begin position="1674"/>
        <end position="1678"/>
    </location>
</feature>
<feature type="helix" evidence="16">
    <location>
        <begin position="1679"/>
        <end position="1682"/>
    </location>
</feature>
<feature type="turn" evidence="16">
    <location>
        <begin position="1683"/>
        <end position="1685"/>
    </location>
</feature>
<feature type="helix" evidence="16">
    <location>
        <begin position="1686"/>
        <end position="1688"/>
    </location>
</feature>
<feature type="strand" evidence="16">
    <location>
        <begin position="1691"/>
        <end position="1694"/>
    </location>
</feature>
<feature type="strand" evidence="16">
    <location>
        <begin position="1702"/>
        <end position="1706"/>
    </location>
</feature>
<feature type="strand" evidence="16">
    <location>
        <begin position="1717"/>
        <end position="1720"/>
    </location>
</feature>
<feature type="strand" evidence="16">
    <location>
        <begin position="1730"/>
        <end position="1734"/>
    </location>
</feature>
<feature type="strand" evidence="16">
    <location>
        <begin position="1741"/>
        <end position="1746"/>
    </location>
</feature>
<feature type="strand" evidence="16">
    <location>
        <begin position="1749"/>
        <end position="1754"/>
    </location>
</feature>
<feature type="strand" evidence="16">
    <location>
        <begin position="1757"/>
        <end position="1759"/>
    </location>
</feature>
<feature type="strand" evidence="16">
    <location>
        <begin position="1764"/>
        <end position="1768"/>
    </location>
</feature>
<feature type="turn" evidence="16">
    <location>
        <begin position="1769"/>
        <end position="1773"/>
    </location>
</feature>
<feature type="helix" evidence="16">
    <location>
        <begin position="1775"/>
        <end position="1778"/>
    </location>
</feature>
<feature type="strand" evidence="16">
    <location>
        <begin position="1781"/>
        <end position="1784"/>
    </location>
</feature>
<feature type="helix" evidence="16">
    <location>
        <begin position="1793"/>
        <end position="1799"/>
    </location>
</feature>
<feature type="strand" evidence="16">
    <location>
        <begin position="1800"/>
        <end position="1802"/>
    </location>
</feature>
<feature type="strand" evidence="16">
    <location>
        <begin position="1815"/>
        <end position="1819"/>
    </location>
</feature>
<feature type="strand" evidence="16">
    <location>
        <begin position="1822"/>
        <end position="1826"/>
    </location>
</feature>
<feature type="strand" evidence="16">
    <location>
        <begin position="1835"/>
        <end position="1839"/>
    </location>
</feature>
<feature type="strand" evidence="16">
    <location>
        <begin position="1842"/>
        <end position="1847"/>
    </location>
</feature>
<feature type="turn" evidence="16">
    <location>
        <begin position="1848"/>
        <end position="1851"/>
    </location>
</feature>
<feature type="strand" evidence="16">
    <location>
        <begin position="1856"/>
        <end position="1860"/>
    </location>
</feature>
<feature type="strand" evidence="16">
    <location>
        <begin position="1863"/>
        <end position="1867"/>
    </location>
</feature>
<feature type="helix" evidence="16">
    <location>
        <begin position="1869"/>
        <end position="1871"/>
    </location>
</feature>
<feature type="strand" evidence="16">
    <location>
        <begin position="1878"/>
        <end position="1882"/>
    </location>
</feature>
<feature type="strand" evidence="16">
    <location>
        <begin position="1885"/>
        <end position="1889"/>
    </location>
</feature>
<feature type="strand" evidence="16">
    <location>
        <begin position="1898"/>
        <end position="1902"/>
    </location>
</feature>
<feature type="strand" evidence="16">
    <location>
        <begin position="1905"/>
        <end position="1910"/>
    </location>
</feature>
<feature type="strand" evidence="16">
    <location>
        <begin position="1928"/>
        <end position="1932"/>
    </location>
</feature>
<feature type="strand" evidence="16">
    <location>
        <begin position="1935"/>
        <end position="1939"/>
    </location>
</feature>
<feature type="strand" evidence="16">
    <location>
        <begin position="1961"/>
        <end position="1963"/>
    </location>
</feature>
<feature type="strand" evidence="16">
    <location>
        <begin position="1969"/>
        <end position="1973"/>
    </location>
</feature>
<feature type="strand" evidence="16">
    <location>
        <begin position="1976"/>
        <end position="1980"/>
    </location>
</feature>
<feature type="strand" evidence="16">
    <location>
        <begin position="1991"/>
        <end position="1995"/>
    </location>
</feature>
<feature type="strand" evidence="16">
    <location>
        <begin position="2009"/>
        <end position="2013"/>
    </location>
</feature>
<feature type="strand" evidence="16">
    <location>
        <begin position="2016"/>
        <end position="2020"/>
    </location>
</feature>
<feature type="strand" evidence="16">
    <location>
        <begin position="2029"/>
        <end position="2033"/>
    </location>
</feature>
<feature type="strand" evidence="16">
    <location>
        <begin position="2036"/>
        <end position="2040"/>
    </location>
</feature>
<feature type="turn" evidence="16">
    <location>
        <begin position="2045"/>
        <end position="2048"/>
    </location>
</feature>
<feature type="strand" evidence="16">
    <location>
        <begin position="2059"/>
        <end position="2063"/>
    </location>
</feature>
<feature type="strand" evidence="16">
    <location>
        <begin position="2066"/>
        <end position="2070"/>
    </location>
</feature>
<feature type="strand" evidence="16">
    <location>
        <begin position="2074"/>
        <end position="2076"/>
    </location>
</feature>
<feature type="strand" evidence="16">
    <location>
        <begin position="2079"/>
        <end position="2082"/>
    </location>
</feature>
<feature type="strand" evidence="16">
    <location>
        <begin position="2088"/>
        <end position="2091"/>
    </location>
</feature>
<feature type="turn" evidence="16">
    <location>
        <begin position="2093"/>
        <end position="2095"/>
    </location>
</feature>
<feature type="strand" evidence="16">
    <location>
        <begin position="2101"/>
        <end position="2105"/>
    </location>
</feature>
<feature type="strand" evidence="16">
    <location>
        <begin position="2108"/>
        <end position="2112"/>
    </location>
</feature>
<feature type="strand" evidence="16">
    <location>
        <begin position="2134"/>
        <end position="2136"/>
    </location>
</feature>
<feature type="strand" evidence="16">
    <location>
        <begin position="2141"/>
        <end position="2145"/>
    </location>
</feature>
<feature type="strand" evidence="16">
    <location>
        <begin position="2148"/>
        <end position="2150"/>
    </location>
</feature>
<feature type="strand" evidence="16">
    <location>
        <begin position="2161"/>
        <end position="2165"/>
    </location>
</feature>
<feature type="strand" evidence="16">
    <location>
        <begin position="2168"/>
        <end position="2173"/>
    </location>
</feature>
<feature type="strand" evidence="16">
    <location>
        <begin position="2177"/>
        <end position="2180"/>
    </location>
</feature>
<feature type="strand" evidence="16">
    <location>
        <begin position="2185"/>
        <end position="2187"/>
    </location>
</feature>
<feature type="strand" evidence="16">
    <location>
        <begin position="2191"/>
        <end position="2194"/>
    </location>
</feature>
<feature type="strand" evidence="16">
    <location>
        <begin position="2199"/>
        <end position="2202"/>
    </location>
</feature>
<feature type="strand" evidence="16">
    <location>
        <begin position="2206"/>
        <end position="2208"/>
    </location>
</feature>
<feature type="strand" evidence="16">
    <location>
        <begin position="2211"/>
        <end position="2215"/>
    </location>
</feature>
<feature type="strand" evidence="16">
    <location>
        <begin position="2218"/>
        <end position="2222"/>
    </location>
</feature>
<feature type="turn" evidence="16">
    <location>
        <begin position="2224"/>
        <end position="2226"/>
    </location>
</feature>
<feature type="strand" evidence="16">
    <location>
        <begin position="2232"/>
        <end position="2236"/>
    </location>
</feature>
<feature type="strand" evidence="16">
    <location>
        <begin position="2239"/>
        <end position="2243"/>
    </location>
</feature>
<feature type="strand" evidence="16">
    <location>
        <begin position="2252"/>
        <end position="2256"/>
    </location>
</feature>
<feature type="strand" evidence="16">
    <location>
        <begin position="2259"/>
        <end position="2263"/>
    </location>
</feature>
<feature type="strand" evidence="16">
    <location>
        <begin position="2272"/>
        <end position="2276"/>
    </location>
</feature>
<feature type="strand" evidence="16">
    <location>
        <begin position="2279"/>
        <end position="2283"/>
    </location>
</feature>
<feature type="strand" evidence="16">
    <location>
        <begin position="2292"/>
        <end position="2296"/>
    </location>
</feature>
<feature type="strand" evidence="16">
    <location>
        <begin position="2299"/>
        <end position="2304"/>
    </location>
</feature>
<feature type="strand" evidence="16">
    <location>
        <begin position="2316"/>
        <end position="2318"/>
    </location>
</feature>
<feature type="strand" evidence="16">
    <location>
        <begin position="2322"/>
        <end position="2326"/>
    </location>
</feature>
<feature type="strand" evidence="16">
    <location>
        <begin position="2329"/>
        <end position="2333"/>
    </location>
</feature>
<feature type="strand" evidence="16">
    <location>
        <begin position="2342"/>
        <end position="2346"/>
    </location>
</feature>
<feature type="strand" evidence="16">
    <location>
        <begin position="2349"/>
        <end position="2353"/>
    </location>
</feature>
<feature type="turn" evidence="16">
    <location>
        <begin position="2355"/>
        <end position="2357"/>
    </location>
</feature>
<comment type="function">
    <molecule>Cytotoxin-L</molecule>
    <text evidence="3 4 8 10 11">Precursor of a cytotoxin that targets the vascular endothelium, inducing an anti-inflammatory effect and resulting in lethal toxic shock syndrome (PubMed:19527792, PubMed:21199912). TcsL constitutes the main toxin that mediates the pathology of P.sordellii infection, an anaerobic Gram-positive bacterium found in soil and in the gastrointestinal and vaginal tracts of animals and humans; although the majority of carriers are asymptomatic, pathogenic P.sordellii infections arise rapidly and are highly lethal (By similarity). This form constitutes the precursor of the toxin: it enters into host cells and mediates autoprocessing to release the active toxin (Glucosyltransferase TcsL) into the host cytosol (By similarity). Targets vascular endothelium by binding to the semaphorin proteins SEMA6A and SEMA6B, and enters host cells via clathrin-mediated endocytosis (By similarity). Once entered into host cells, acidification in the endosome promotes the membrane insertion of the translocation region and formation of a pore, leading to translocation of the GT44 and peptidase C80 domains across the endosomal membrane (By similarity) (PubMed:11500421). This activates the peptidase C80 domain and autocatalytic processing, releasing the N-terminal part (Glucosyltransferase TcsL), which constitutes the active part of the toxin, in the cytosol (By similarity).</text>
</comment>
<comment type="function">
    <molecule>Glucosyltransferase TcsL</molecule>
    <text evidence="4">Active form of the toxin, which is released into the host cytosol following autoprocessing and inactivates small GTPases. Acts by mediating monoglucosylation of small GTPases of the Ras (H-Ras/HRAS, K-Ras/KRAS and N-Ras/NRAS) family in host cells at the conserved threonine residue located in the switch I region ('Thr-37/35'), using UDP-alpha-D-glucose as the sugar donor. Also able to catalyze monoglucosylation of some members of the Rho family (Rac1 and Rap2A), but with less efficiency than with Ras proteins. Monoglucosylation of host small GTPases completely prevents the recognition of the downstream effector, blocking the GTPases in their inactive form and leading to apoptosis. Induces an anti-inflammatory effect, mainly by inactivating Ras proteins which results in blockage of the cell cycle and killing of immune cells. The absence or moderate local inflammatory response allows C.sordellii spreading in deep tissues, production of toxin which is released in the general circulation and causes a toxic shock syndrome.</text>
</comment>
<comment type="catalytic activity">
    <molecule>Glucosyltransferase TcsL</molecule>
    <reaction evidence="4">
        <text>L-threonyl-[protein] + UDP-alpha-D-glucose = 3-O-(alpha-D-glucosyl)-L-threonyl-[protein] + UDP + H(+)</text>
        <dbReference type="Rhea" id="RHEA:64684"/>
        <dbReference type="Rhea" id="RHEA-COMP:11060"/>
        <dbReference type="Rhea" id="RHEA-COMP:16656"/>
        <dbReference type="ChEBI" id="CHEBI:15378"/>
        <dbReference type="ChEBI" id="CHEBI:30013"/>
        <dbReference type="ChEBI" id="CHEBI:58223"/>
        <dbReference type="ChEBI" id="CHEBI:58885"/>
        <dbReference type="ChEBI" id="CHEBI:156085"/>
    </reaction>
    <physiologicalReaction direction="left-to-right" evidence="4">
        <dbReference type="Rhea" id="RHEA:64685"/>
    </physiologicalReaction>
</comment>
<comment type="cofactor">
    <molecule>Cytotoxin-L</molecule>
    <cofactor evidence="3">
        <name>Zn(2+)</name>
        <dbReference type="ChEBI" id="CHEBI:29105"/>
    </cofactor>
    <text evidence="3">Binds 1 Zn(2+) ion per subunit. Zn(2+) is required for autocatalytic cleavage.</text>
</comment>
<comment type="cofactor">
    <molecule>Glucosyltransferase TcsL</molecule>
    <cofactor evidence="4">
        <name>Mn(2+)</name>
        <dbReference type="ChEBI" id="CHEBI:29035"/>
    </cofactor>
    <cofactor evidence="4">
        <name>Mg(2+)</name>
        <dbReference type="ChEBI" id="CHEBI:18420"/>
    </cofactor>
    <text evidence="4">Has higher activity with Mn(2+), but most likely uses Mg(2+) in host cells. Mn(2+) or Mg(2+) are required for glucosyltransferase activity.</text>
</comment>
<comment type="activity regulation">
    <molecule>Cytotoxin-L</molecule>
    <text evidence="4">Protease activity is activated upon binding to 1D-myo-inositol hexakisphosphate (InsP6), which induces conformational reorganization.</text>
</comment>
<comment type="subunit">
    <molecule>Cytotoxin-L</molecule>
    <text evidence="4 9">Homomultimer; forms an inactive homomultimer at pH 8, which dissociates at pH 4, leading to cytotoxicity (PubMed:15155642). Interacts with host SEMA6A; interaction promotes toxin entry into host cell (By similarity). Interacts with host SEMA6B; interaction promotes toxin entry into host cell (By similarity).</text>
</comment>
<comment type="subcellular location">
    <molecule>Cytotoxin-L</molecule>
    <subcellularLocation>
        <location evidence="3">Secreted</location>
    </subcellularLocation>
    <subcellularLocation>
        <location evidence="3">Host endosome membrane</location>
    </subcellularLocation>
    <text evidence="3 4">Secreted from P.sordellii cell into the extracellular environment via help of holin-like protein TcdE/UtxA. Binds to the cell surface receptors via the receptor-binding region and enters the cells via clathrin-mediated endocytosis. Acidification in the endosome triggers conformational changes that promote the membrane insertion of the translocation region, allowing formation of a pore, leading to translocation of the GT44 and peptidase C80 domains across the endosomal membrane (By similarity). 1D-myo-inositol hexakisphosphate-binding (InsP6) activates the peptidase C80 domain and autoprocessing, generating the Glucosyltransferase TcsL form, which is released in the host cytosol (By similarity).</text>
</comment>
<comment type="subcellular location">
    <molecule>Glucosyltransferase TcsL</molecule>
    <subcellularLocation>
        <location evidence="4">Host cytoplasm</location>
        <location evidence="4">Host cytosol</location>
    </subcellularLocation>
    <subcellularLocation>
        <location evidence="4">Host cell membrane</location>
        <topology evidence="4">Peripheral membrane protein</topology>
        <orientation evidence="4">Cytoplasmic side</orientation>
    </subcellularLocation>
    <text evidence="4">Binding to phospholipids, such as phosphatidylserine and phosphatidic acid promotes localization to the inner face of the cell membrane close to its membrane anchored substrates (small GTPases).</text>
</comment>
<comment type="domain">
    <molecule>Glucosyltransferase TcsL</molecule>
    <text evidence="4">Consists of 4 functional domains: (1) the N-terminal GT44 domain (glucosyltransferase, also named GTD), which mediates glucosylation of host small GTPases, (2) an autoprocessing region that catalyzes autoprocessing to release the N-terminal GT44 domain in the host cytosol, (3) the translocation region that forms a pore to promote translocation of the GT44 and peptidase C80 domains across the endosomal membrane and (4) the receptor-binding (CROPS) region that mediates binding to host cells and contribute to entry into cells.</text>
</comment>
<comment type="domain">
    <molecule>Cytotoxin-L</molecule>
    <text evidence="3">The receptor-binding (CROPS) region is dynamic and can have open and closed conformations depending of the pH: has an open conformation at endosomal pH and a closed conformation at neutral pH.</text>
</comment>
<comment type="domain">
    <molecule>Cytotoxin-L</molecule>
    <text evidence="2">The cell wall-binding repeats bind carbohydrates, probably contributing to entry into cells.</text>
</comment>
<comment type="domain">
    <molecule>Glucosyltransferase TcsL</molecule>
    <text evidence="4">The four-helical bundle region mediates binding to phospholipids, such as phosphatidylserine and phosphatidic acid. This promotes localization to the inner face of the cell membrane close to small GTPases.</text>
</comment>
<comment type="PTM">
    <molecule>Cytotoxin-L</molecule>
    <text evidence="4">Undergoes autocatalytic cleavage to release the N-terminal part (Glucosyltransferase TcsL), which constitutes the active part of the toxin, in the host cytosol. 1D-myo-inositol hexakisphosphate-binding (InsP6) activates the peptidase C80 domain and promotes autoprocessing.</text>
</comment>
<comment type="disruption phenotype">
    <text evidence="11">Cells lacking tcsL are not able to induce lethal infections (PubMed:21199912). Infected mice also show strongly reduced formation of edema during uterine infection (PubMed:21199912).</text>
</comment>
<comment type="similarity">
    <text evidence="14">Belongs to the clostridial glucosylating toxin (LCGT) family.</text>
</comment>
<accession>T0D3N5</accession>
<gene>
    <name evidence="13" type="primary">tcsL</name>
    <name evidence="15" type="ORF">H477_0263</name>
</gene>